<sequence length="741" mass="83457">MIHMLNAAAYRVKWTRSGAAKRAACLVAAAYALKTLYPIIGKRLKQPGHRKAKAEAYSPAENREILHCTEIICKKPAPGLNAAFFKQLLELRKILFPKLVTTETGWLCLHSVALISRTFLSIYVAGLDGKIVKSIVEKKPRTFIIKLIKWLMIAIPATFVNSAIRYLECKLALAFRTRLVDHAYETYFANQTYYKVINMDGRLANPDQSLTEDIMMFSQSVAHLYSNLTKPILDVILTSYTLIRTATSRGASPIGPTLLAGLVVYATAKVLKACSPKFGSLVAEEAHRKGYLRYVHSRIIANVEEIAFYRGHKVEMKQLQKCYKALAYQMNLILSKRLWYIMIEQFLMKYVWSSCGLIMVAIPIITATGFADGDLEDGPKQAMVSDRTEAFTTARNLLASGADAIERIMSSYKEITELAGYTARVYNMFWVFDEVKRGIYKRTVTQEPENHSKRGGNLELPLSDTLAIKGTVIDVDHGIICENVPIITPAGEVVASRLNFKVEEGMHLLITGPNGCGKSSLFRILSGLWPVYEGVLYKPPPQHMFYIPQRPYMSLGSLRDQVIYPDSADDMREKGYTDQDLERILHSVHLYHIVQREGGWDAVMDWKDVLSGGEKQRMGMARMFYHKPKYALLDECTSAVSIDVEGKIFQAAIGAGISLLSITHRPSLWKYHTHLLQFDGEGGWRFEQLDTAIRLTLSEEKQKLESQLAGIPKMQQRLNELCKILGEDSVLKTIQTAEKTS</sequence>
<organism>
    <name type="scientific">Mus musculus</name>
    <name type="common">Mouse</name>
    <dbReference type="NCBI Taxonomy" id="10090"/>
    <lineage>
        <taxon>Eukaryota</taxon>
        <taxon>Metazoa</taxon>
        <taxon>Chordata</taxon>
        <taxon>Craniata</taxon>
        <taxon>Vertebrata</taxon>
        <taxon>Euteleostomi</taxon>
        <taxon>Mammalia</taxon>
        <taxon>Eutheria</taxon>
        <taxon>Euarchontoglires</taxon>
        <taxon>Glires</taxon>
        <taxon>Rodentia</taxon>
        <taxon>Myomorpha</taxon>
        <taxon>Muroidea</taxon>
        <taxon>Muridae</taxon>
        <taxon>Murinae</taxon>
        <taxon>Mus</taxon>
        <taxon>Mus</taxon>
    </lineage>
</organism>
<protein>
    <recommendedName>
        <fullName>ATP-binding cassette sub-family D member 2</fullName>
        <ecNumber evidence="2">3.1.2.-</ecNumber>
        <ecNumber evidence="2">7.6.2.-</ecNumber>
    </recommendedName>
    <alternativeName>
        <fullName>Adrenoleukodystrophy-related protein</fullName>
    </alternativeName>
</protein>
<name>ABCD2_MOUSE</name>
<dbReference type="EC" id="3.1.2.-" evidence="2"/>
<dbReference type="EC" id="7.6.2.-" evidence="2"/>
<dbReference type="EMBL" id="Z48670">
    <property type="protein sequence ID" value="CAA88589.1"/>
    <property type="molecule type" value="mRNA"/>
</dbReference>
<dbReference type="EMBL" id="AK051445">
    <property type="protein sequence ID" value="BAC34641.1"/>
    <property type="molecule type" value="mRNA"/>
</dbReference>
<dbReference type="EMBL" id="AK082588">
    <property type="protein sequence ID" value="BAC38542.1"/>
    <property type="molecule type" value="mRNA"/>
</dbReference>
<dbReference type="EMBL" id="AC113102">
    <property type="status" value="NOT_ANNOTATED_CDS"/>
    <property type="molecule type" value="Genomic_DNA"/>
</dbReference>
<dbReference type="EMBL" id="BC019187">
    <property type="protein sequence ID" value="AAH19187.1"/>
    <property type="molecule type" value="mRNA"/>
</dbReference>
<dbReference type="CCDS" id="CCDS27760.1"/>
<dbReference type="RefSeq" id="NP_036124.2">
    <property type="nucleotide sequence ID" value="NM_011994.4"/>
</dbReference>
<dbReference type="SMR" id="Q61285"/>
<dbReference type="BioGRID" id="205032">
    <property type="interactions" value="16"/>
</dbReference>
<dbReference type="FunCoup" id="Q61285">
    <property type="interactions" value="1014"/>
</dbReference>
<dbReference type="IntAct" id="Q61285">
    <property type="interactions" value="4"/>
</dbReference>
<dbReference type="STRING" id="10090.ENSMUSP00000068940"/>
<dbReference type="GlyCosmos" id="Q61285">
    <property type="glycosylation" value="2 sites, No reported glycans"/>
</dbReference>
<dbReference type="GlyGen" id="Q61285">
    <property type="glycosylation" value="3 sites, 1 O-linked glycan (1 site)"/>
</dbReference>
<dbReference type="iPTMnet" id="Q61285"/>
<dbReference type="PhosphoSitePlus" id="Q61285"/>
<dbReference type="SwissPalm" id="Q61285"/>
<dbReference type="PaxDb" id="10090-ENSMUSP00000068940"/>
<dbReference type="ProteomicsDB" id="297498"/>
<dbReference type="ProteomicsDB" id="338909"/>
<dbReference type="Pumba" id="Q61285"/>
<dbReference type="Antibodypedia" id="42512">
    <property type="antibodies" value="249 antibodies from 31 providers"/>
</dbReference>
<dbReference type="DNASU" id="26874"/>
<dbReference type="Ensembl" id="ENSMUST00000069511.8">
    <property type="protein sequence ID" value="ENSMUSP00000068940.7"/>
    <property type="gene ID" value="ENSMUSG00000055782.10"/>
</dbReference>
<dbReference type="GeneID" id="26874"/>
<dbReference type="KEGG" id="mmu:26874"/>
<dbReference type="UCSC" id="uc007xhx.1">
    <property type="organism name" value="mouse"/>
</dbReference>
<dbReference type="AGR" id="MGI:1349467"/>
<dbReference type="CTD" id="225"/>
<dbReference type="MGI" id="MGI:1349467">
    <property type="gene designation" value="Abcd2"/>
</dbReference>
<dbReference type="VEuPathDB" id="HostDB:ENSMUSG00000055782"/>
<dbReference type="eggNOG" id="KOG0064">
    <property type="taxonomic scope" value="Eukaryota"/>
</dbReference>
<dbReference type="GeneTree" id="ENSGT00950000182955"/>
<dbReference type="InParanoid" id="Q61285"/>
<dbReference type="OMA" id="DIQAGHF"/>
<dbReference type="OrthoDB" id="422637at2759"/>
<dbReference type="PhylomeDB" id="Q61285"/>
<dbReference type="TreeFam" id="TF105205"/>
<dbReference type="BRENDA" id="7.6.2.4">
    <property type="organism ID" value="3474"/>
</dbReference>
<dbReference type="Reactome" id="R-MMU-1369062">
    <property type="pathway name" value="ABC transporters in lipid homeostasis"/>
</dbReference>
<dbReference type="Reactome" id="R-MMU-9603798">
    <property type="pathway name" value="Class I peroxisomal membrane protein import"/>
</dbReference>
<dbReference type="BioGRID-ORCS" id="26874">
    <property type="hits" value="3 hits in 77 CRISPR screens"/>
</dbReference>
<dbReference type="CD-CODE" id="CE726F99">
    <property type="entry name" value="Postsynaptic density"/>
</dbReference>
<dbReference type="ChiTaRS" id="Abcd2">
    <property type="organism name" value="mouse"/>
</dbReference>
<dbReference type="PRO" id="PR:Q61285"/>
<dbReference type="Proteomes" id="UP000000589">
    <property type="component" value="Chromosome 15"/>
</dbReference>
<dbReference type="RNAct" id="Q61285">
    <property type="molecule type" value="protein"/>
</dbReference>
<dbReference type="Bgee" id="ENSMUSG00000055782">
    <property type="expression patterns" value="Expressed in white adipose tissue and 195 other cell types or tissues"/>
</dbReference>
<dbReference type="GO" id="GO:0005739">
    <property type="term" value="C:mitochondrion"/>
    <property type="evidence" value="ECO:0007005"/>
    <property type="project" value="MGI"/>
</dbReference>
<dbReference type="GO" id="GO:0005778">
    <property type="term" value="C:peroxisomal membrane"/>
    <property type="evidence" value="ECO:0000314"/>
    <property type="project" value="MGI"/>
</dbReference>
<dbReference type="GO" id="GO:0005777">
    <property type="term" value="C:peroxisome"/>
    <property type="evidence" value="ECO:0000314"/>
    <property type="project" value="UniProtKB"/>
</dbReference>
<dbReference type="GO" id="GO:0140359">
    <property type="term" value="F:ABC-type transporter activity"/>
    <property type="evidence" value="ECO:0007669"/>
    <property type="project" value="InterPro"/>
</dbReference>
<dbReference type="GO" id="GO:0042887">
    <property type="term" value="F:amide transmembrane transporter activity"/>
    <property type="evidence" value="ECO:0000316"/>
    <property type="project" value="MGI"/>
</dbReference>
<dbReference type="GO" id="GO:0005524">
    <property type="term" value="F:ATP binding"/>
    <property type="evidence" value="ECO:0007669"/>
    <property type="project" value="UniProtKB-KW"/>
</dbReference>
<dbReference type="GO" id="GO:0016887">
    <property type="term" value="F:ATP hydrolysis activity"/>
    <property type="evidence" value="ECO:0007669"/>
    <property type="project" value="Ensembl"/>
</dbReference>
<dbReference type="GO" id="GO:0042626">
    <property type="term" value="F:ATPase-coupled transmembrane transporter activity"/>
    <property type="evidence" value="ECO:0000250"/>
    <property type="project" value="UniProtKB"/>
</dbReference>
<dbReference type="GO" id="GO:0047617">
    <property type="term" value="F:fatty acyl-CoA hydrolase activity"/>
    <property type="evidence" value="ECO:0000250"/>
    <property type="project" value="UniProtKB"/>
</dbReference>
<dbReference type="GO" id="GO:0005324">
    <property type="term" value="F:long-chain fatty acid transmembrane transporter activity"/>
    <property type="evidence" value="ECO:0000316"/>
    <property type="project" value="MGI"/>
</dbReference>
<dbReference type="GO" id="GO:0015932">
    <property type="term" value="F:nucleobase-containing compound transmembrane transporter activity"/>
    <property type="evidence" value="ECO:0000316"/>
    <property type="project" value="MGI"/>
</dbReference>
<dbReference type="GO" id="GO:0015605">
    <property type="term" value="F:organophosphate ester transmembrane transporter activity"/>
    <property type="evidence" value="ECO:0000316"/>
    <property type="project" value="MGI"/>
</dbReference>
<dbReference type="GO" id="GO:0046982">
    <property type="term" value="F:protein heterodimerization activity"/>
    <property type="evidence" value="ECO:0000250"/>
    <property type="project" value="UniProtKB"/>
</dbReference>
<dbReference type="GO" id="GO:0042803">
    <property type="term" value="F:protein homodimerization activity"/>
    <property type="evidence" value="ECO:0000250"/>
    <property type="project" value="UniProtKB"/>
</dbReference>
<dbReference type="GO" id="GO:1901682">
    <property type="term" value="F:sulfur compound transmembrane transporter activity"/>
    <property type="evidence" value="ECO:0000316"/>
    <property type="project" value="MGI"/>
</dbReference>
<dbReference type="GO" id="GO:0036109">
    <property type="term" value="P:alpha-linolenic acid metabolic process"/>
    <property type="evidence" value="ECO:0000316"/>
    <property type="project" value="MGI"/>
</dbReference>
<dbReference type="GO" id="GO:0006635">
    <property type="term" value="P:fatty acid beta-oxidation"/>
    <property type="evidence" value="ECO:0000315"/>
    <property type="project" value="UniProtKB"/>
</dbReference>
<dbReference type="GO" id="GO:0006633">
    <property type="term" value="P:fatty acid biosynthetic process"/>
    <property type="evidence" value="ECO:0000316"/>
    <property type="project" value="MGI"/>
</dbReference>
<dbReference type="GO" id="GO:1901570">
    <property type="term" value="P:fatty acid derivative biosynthetic process"/>
    <property type="evidence" value="ECO:0000316"/>
    <property type="project" value="MGI"/>
</dbReference>
<dbReference type="GO" id="GO:0043651">
    <property type="term" value="P:linoleic acid metabolic process"/>
    <property type="evidence" value="ECO:0000316"/>
    <property type="project" value="MGI"/>
</dbReference>
<dbReference type="GO" id="GO:0042759">
    <property type="term" value="P:long-chain fatty acid biosynthetic process"/>
    <property type="evidence" value="ECO:0000316"/>
    <property type="project" value="MGI"/>
</dbReference>
<dbReference type="GO" id="GO:0043217">
    <property type="term" value="P:myelin maintenance"/>
    <property type="evidence" value="ECO:0000315"/>
    <property type="project" value="UniProtKB"/>
</dbReference>
<dbReference type="GO" id="GO:1900016">
    <property type="term" value="P:negative regulation of cytokine production involved in inflammatory response"/>
    <property type="evidence" value="ECO:0000315"/>
    <property type="project" value="UniProtKB"/>
</dbReference>
<dbReference type="GO" id="GO:1903427">
    <property type="term" value="P:negative regulation of reactive oxygen species biosynthetic process"/>
    <property type="evidence" value="ECO:0000315"/>
    <property type="project" value="UniProtKB"/>
</dbReference>
<dbReference type="GO" id="GO:1990535">
    <property type="term" value="P:neuron projection maintenance"/>
    <property type="evidence" value="ECO:0000315"/>
    <property type="project" value="UniProtKB"/>
</dbReference>
<dbReference type="GO" id="GO:0032000">
    <property type="term" value="P:positive regulation of fatty acid beta-oxidation"/>
    <property type="evidence" value="ECO:0000315"/>
    <property type="project" value="UniProtKB"/>
</dbReference>
<dbReference type="GO" id="GO:2001280">
    <property type="term" value="P:positive regulation of unsaturated fatty acid biosynthetic process"/>
    <property type="evidence" value="ECO:0000315"/>
    <property type="project" value="UniProtKB"/>
</dbReference>
<dbReference type="GO" id="GO:0009617">
    <property type="term" value="P:response to bacterium"/>
    <property type="evidence" value="ECO:0000270"/>
    <property type="project" value="MGI"/>
</dbReference>
<dbReference type="GO" id="GO:0006636">
    <property type="term" value="P:unsaturated fatty acid biosynthetic process"/>
    <property type="evidence" value="ECO:0000316"/>
    <property type="project" value="MGI"/>
</dbReference>
<dbReference type="GO" id="GO:0042760">
    <property type="term" value="P:very long-chain fatty acid catabolic process"/>
    <property type="evidence" value="ECO:0000315"/>
    <property type="project" value="UniProtKB"/>
</dbReference>
<dbReference type="GO" id="GO:0000038">
    <property type="term" value="P:very long-chain fatty acid metabolic process"/>
    <property type="evidence" value="ECO:0000250"/>
    <property type="project" value="UniProtKB"/>
</dbReference>
<dbReference type="CDD" id="cd03223">
    <property type="entry name" value="ABCD_peroxisomal_ALDP"/>
    <property type="match status" value="1"/>
</dbReference>
<dbReference type="FunFam" id="3.40.50.300:FF:000800">
    <property type="entry name" value="ATP-binding cassette sub-family D member 1"/>
    <property type="match status" value="1"/>
</dbReference>
<dbReference type="Gene3D" id="1.20.1560.10">
    <property type="entry name" value="ABC transporter type 1, transmembrane domain"/>
    <property type="match status" value="1"/>
</dbReference>
<dbReference type="Gene3D" id="3.40.50.300">
    <property type="entry name" value="P-loop containing nucleotide triphosphate hydrolases"/>
    <property type="match status" value="1"/>
</dbReference>
<dbReference type="InterPro" id="IPR003593">
    <property type="entry name" value="AAA+_ATPase"/>
</dbReference>
<dbReference type="InterPro" id="IPR011527">
    <property type="entry name" value="ABC1_TM_dom"/>
</dbReference>
<dbReference type="InterPro" id="IPR036640">
    <property type="entry name" value="ABC1_TM_sf"/>
</dbReference>
<dbReference type="InterPro" id="IPR003439">
    <property type="entry name" value="ABC_transporter-like_ATP-bd"/>
</dbReference>
<dbReference type="InterPro" id="IPR017871">
    <property type="entry name" value="ABC_transporter-like_CS"/>
</dbReference>
<dbReference type="InterPro" id="IPR050835">
    <property type="entry name" value="ABC_transporter_sub-D"/>
</dbReference>
<dbReference type="InterPro" id="IPR027417">
    <property type="entry name" value="P-loop_NTPase"/>
</dbReference>
<dbReference type="PANTHER" id="PTHR11384:SF24">
    <property type="entry name" value="ATP-BINDING CASSETTE SUB-FAMILY D MEMBER 2"/>
    <property type="match status" value="1"/>
</dbReference>
<dbReference type="PANTHER" id="PTHR11384">
    <property type="entry name" value="ATP-BINDING CASSETTE, SUB-FAMILY D MEMBER"/>
    <property type="match status" value="1"/>
</dbReference>
<dbReference type="Pfam" id="PF06472">
    <property type="entry name" value="ABC_membrane_2"/>
    <property type="match status" value="1"/>
</dbReference>
<dbReference type="Pfam" id="PF00005">
    <property type="entry name" value="ABC_tran"/>
    <property type="match status" value="1"/>
</dbReference>
<dbReference type="SMART" id="SM00382">
    <property type="entry name" value="AAA"/>
    <property type="match status" value="1"/>
</dbReference>
<dbReference type="SUPFAM" id="SSF90123">
    <property type="entry name" value="ABC transporter transmembrane region"/>
    <property type="match status" value="1"/>
</dbReference>
<dbReference type="SUPFAM" id="SSF52540">
    <property type="entry name" value="P-loop containing nucleoside triphosphate hydrolases"/>
    <property type="match status" value="1"/>
</dbReference>
<dbReference type="PROSITE" id="PS50929">
    <property type="entry name" value="ABC_TM1F"/>
    <property type="match status" value="1"/>
</dbReference>
<dbReference type="PROSITE" id="PS00211">
    <property type="entry name" value="ABC_TRANSPORTER_1"/>
    <property type="match status" value="1"/>
</dbReference>
<dbReference type="PROSITE" id="PS50893">
    <property type="entry name" value="ABC_TRANSPORTER_2"/>
    <property type="match status" value="1"/>
</dbReference>
<proteinExistence type="evidence at protein level"/>
<keyword id="KW-0067">ATP-binding</keyword>
<keyword id="KW-0325">Glycoprotein</keyword>
<keyword id="KW-0378">Hydrolase</keyword>
<keyword id="KW-0443">Lipid metabolism</keyword>
<keyword id="KW-0472">Membrane</keyword>
<keyword id="KW-0547">Nucleotide-binding</keyword>
<keyword id="KW-0576">Peroxisome</keyword>
<keyword id="KW-0597">Phosphoprotein</keyword>
<keyword id="KW-1185">Reference proteome</keyword>
<keyword id="KW-1278">Translocase</keyword>
<keyword id="KW-0812">Transmembrane</keyword>
<keyword id="KW-1133">Transmembrane helix</keyword>
<keyword id="KW-0813">Transport</keyword>
<accession>Q61285</accession>
<accession>A0A0R4J0U5</accession>
<accession>Q8BQ63</accession>
<accession>Q8C4B6</accession>
<reference key="1">
    <citation type="journal article" date="1996" name="Proc. Natl. Acad. Sci. U.S.A.">
        <title>A close relative of the adrenoleukodystrophy (ALD) gene codes for a peroxisomal protein with a specific expression pattern.</title>
        <authorList>
            <person name="Lombard-Platet G."/>
            <person name="Savary S."/>
            <person name="Sarde C.-O."/>
            <person name="Mandel J.-L."/>
            <person name="Chimini G."/>
        </authorList>
    </citation>
    <scope>NUCLEOTIDE SEQUENCE [MRNA]</scope>
    <scope>TISSUE SPECIFICITY</scope>
    <scope>SUBCELLULAR LOCATION</scope>
    <source>
        <strain>DBA/2J</strain>
    </source>
</reference>
<reference key="2">
    <citation type="journal article" date="2005" name="Science">
        <title>The transcriptional landscape of the mammalian genome.</title>
        <authorList>
            <person name="Carninci P."/>
            <person name="Kasukawa T."/>
            <person name="Katayama S."/>
            <person name="Gough J."/>
            <person name="Frith M.C."/>
            <person name="Maeda N."/>
            <person name="Oyama R."/>
            <person name="Ravasi T."/>
            <person name="Lenhard B."/>
            <person name="Wells C."/>
            <person name="Kodzius R."/>
            <person name="Shimokawa K."/>
            <person name="Bajic V.B."/>
            <person name="Brenner S.E."/>
            <person name="Batalov S."/>
            <person name="Forrest A.R."/>
            <person name="Zavolan M."/>
            <person name="Davis M.J."/>
            <person name="Wilming L.G."/>
            <person name="Aidinis V."/>
            <person name="Allen J.E."/>
            <person name="Ambesi-Impiombato A."/>
            <person name="Apweiler R."/>
            <person name="Aturaliya R.N."/>
            <person name="Bailey T.L."/>
            <person name="Bansal M."/>
            <person name="Baxter L."/>
            <person name="Beisel K.W."/>
            <person name="Bersano T."/>
            <person name="Bono H."/>
            <person name="Chalk A.M."/>
            <person name="Chiu K.P."/>
            <person name="Choudhary V."/>
            <person name="Christoffels A."/>
            <person name="Clutterbuck D.R."/>
            <person name="Crowe M.L."/>
            <person name="Dalla E."/>
            <person name="Dalrymple B.P."/>
            <person name="de Bono B."/>
            <person name="Della Gatta G."/>
            <person name="di Bernardo D."/>
            <person name="Down T."/>
            <person name="Engstrom P."/>
            <person name="Fagiolini M."/>
            <person name="Faulkner G."/>
            <person name="Fletcher C.F."/>
            <person name="Fukushima T."/>
            <person name="Furuno M."/>
            <person name="Futaki S."/>
            <person name="Gariboldi M."/>
            <person name="Georgii-Hemming P."/>
            <person name="Gingeras T.R."/>
            <person name="Gojobori T."/>
            <person name="Green R.E."/>
            <person name="Gustincich S."/>
            <person name="Harbers M."/>
            <person name="Hayashi Y."/>
            <person name="Hensch T.K."/>
            <person name="Hirokawa N."/>
            <person name="Hill D."/>
            <person name="Huminiecki L."/>
            <person name="Iacono M."/>
            <person name="Ikeo K."/>
            <person name="Iwama A."/>
            <person name="Ishikawa T."/>
            <person name="Jakt M."/>
            <person name="Kanapin A."/>
            <person name="Katoh M."/>
            <person name="Kawasawa Y."/>
            <person name="Kelso J."/>
            <person name="Kitamura H."/>
            <person name="Kitano H."/>
            <person name="Kollias G."/>
            <person name="Krishnan S.P."/>
            <person name="Kruger A."/>
            <person name="Kummerfeld S.K."/>
            <person name="Kurochkin I.V."/>
            <person name="Lareau L.F."/>
            <person name="Lazarevic D."/>
            <person name="Lipovich L."/>
            <person name="Liu J."/>
            <person name="Liuni S."/>
            <person name="McWilliam S."/>
            <person name="Madan Babu M."/>
            <person name="Madera M."/>
            <person name="Marchionni L."/>
            <person name="Matsuda H."/>
            <person name="Matsuzawa S."/>
            <person name="Miki H."/>
            <person name="Mignone F."/>
            <person name="Miyake S."/>
            <person name="Morris K."/>
            <person name="Mottagui-Tabar S."/>
            <person name="Mulder N."/>
            <person name="Nakano N."/>
            <person name="Nakauchi H."/>
            <person name="Ng P."/>
            <person name="Nilsson R."/>
            <person name="Nishiguchi S."/>
            <person name="Nishikawa S."/>
            <person name="Nori F."/>
            <person name="Ohara O."/>
            <person name="Okazaki Y."/>
            <person name="Orlando V."/>
            <person name="Pang K.C."/>
            <person name="Pavan W.J."/>
            <person name="Pavesi G."/>
            <person name="Pesole G."/>
            <person name="Petrovsky N."/>
            <person name="Piazza S."/>
            <person name="Reed J."/>
            <person name="Reid J.F."/>
            <person name="Ring B.Z."/>
            <person name="Ringwald M."/>
            <person name="Rost B."/>
            <person name="Ruan Y."/>
            <person name="Salzberg S.L."/>
            <person name="Sandelin A."/>
            <person name="Schneider C."/>
            <person name="Schoenbach C."/>
            <person name="Sekiguchi K."/>
            <person name="Semple C.A."/>
            <person name="Seno S."/>
            <person name="Sessa L."/>
            <person name="Sheng Y."/>
            <person name="Shibata Y."/>
            <person name="Shimada H."/>
            <person name="Shimada K."/>
            <person name="Silva D."/>
            <person name="Sinclair B."/>
            <person name="Sperling S."/>
            <person name="Stupka E."/>
            <person name="Sugiura K."/>
            <person name="Sultana R."/>
            <person name="Takenaka Y."/>
            <person name="Taki K."/>
            <person name="Tammoja K."/>
            <person name="Tan S.L."/>
            <person name="Tang S."/>
            <person name="Taylor M.S."/>
            <person name="Tegner J."/>
            <person name="Teichmann S.A."/>
            <person name="Ueda H.R."/>
            <person name="van Nimwegen E."/>
            <person name="Verardo R."/>
            <person name="Wei C.L."/>
            <person name="Yagi K."/>
            <person name="Yamanishi H."/>
            <person name="Zabarovsky E."/>
            <person name="Zhu S."/>
            <person name="Zimmer A."/>
            <person name="Hide W."/>
            <person name="Bult C."/>
            <person name="Grimmond S.M."/>
            <person name="Teasdale R.D."/>
            <person name="Liu E.T."/>
            <person name="Brusic V."/>
            <person name="Quackenbush J."/>
            <person name="Wahlestedt C."/>
            <person name="Mattick J.S."/>
            <person name="Hume D.A."/>
            <person name="Kai C."/>
            <person name="Sasaki D."/>
            <person name="Tomaru Y."/>
            <person name="Fukuda S."/>
            <person name="Kanamori-Katayama M."/>
            <person name="Suzuki M."/>
            <person name="Aoki J."/>
            <person name="Arakawa T."/>
            <person name="Iida J."/>
            <person name="Imamura K."/>
            <person name="Itoh M."/>
            <person name="Kato T."/>
            <person name="Kawaji H."/>
            <person name="Kawagashira N."/>
            <person name="Kawashima T."/>
            <person name="Kojima M."/>
            <person name="Kondo S."/>
            <person name="Konno H."/>
            <person name="Nakano K."/>
            <person name="Ninomiya N."/>
            <person name="Nishio T."/>
            <person name="Okada M."/>
            <person name="Plessy C."/>
            <person name="Shibata K."/>
            <person name="Shiraki T."/>
            <person name="Suzuki S."/>
            <person name="Tagami M."/>
            <person name="Waki K."/>
            <person name="Watahiki A."/>
            <person name="Okamura-Oho Y."/>
            <person name="Suzuki H."/>
            <person name="Kawai J."/>
            <person name="Hayashizaki Y."/>
        </authorList>
    </citation>
    <scope>NUCLEOTIDE SEQUENCE [LARGE SCALE MRNA]</scope>
    <source>
        <strain>C57BL/6J</strain>
        <tissue>Cerebellum</tissue>
        <tissue>Spinal ganglion</tissue>
    </source>
</reference>
<reference key="3">
    <citation type="journal article" date="2009" name="PLoS Biol.">
        <title>Lineage-specific biology revealed by a finished genome assembly of the mouse.</title>
        <authorList>
            <person name="Church D.M."/>
            <person name="Goodstadt L."/>
            <person name="Hillier L.W."/>
            <person name="Zody M.C."/>
            <person name="Goldstein S."/>
            <person name="She X."/>
            <person name="Bult C.J."/>
            <person name="Agarwala R."/>
            <person name="Cherry J.L."/>
            <person name="DiCuccio M."/>
            <person name="Hlavina W."/>
            <person name="Kapustin Y."/>
            <person name="Meric P."/>
            <person name="Maglott D."/>
            <person name="Birtle Z."/>
            <person name="Marques A.C."/>
            <person name="Graves T."/>
            <person name="Zhou S."/>
            <person name="Teague B."/>
            <person name="Potamousis K."/>
            <person name="Churas C."/>
            <person name="Place M."/>
            <person name="Herschleb J."/>
            <person name="Runnheim R."/>
            <person name="Forrest D."/>
            <person name="Amos-Landgraf J."/>
            <person name="Schwartz D.C."/>
            <person name="Cheng Z."/>
            <person name="Lindblad-Toh K."/>
            <person name="Eichler E.E."/>
            <person name="Ponting C.P."/>
        </authorList>
    </citation>
    <scope>NUCLEOTIDE SEQUENCE [LARGE SCALE GENOMIC DNA]</scope>
    <source>
        <strain>C57BL/6J</strain>
    </source>
</reference>
<reference key="4">
    <citation type="journal article" date="2004" name="Genome Res.">
        <title>The status, quality, and expansion of the NIH full-length cDNA project: the Mammalian Gene Collection (MGC).</title>
        <authorList>
            <consortium name="The MGC Project Team"/>
        </authorList>
    </citation>
    <scope>NUCLEOTIDE SEQUENCE [LARGE SCALE MRNA]</scope>
    <source>
        <strain>FVB/N</strain>
        <tissue>Mammary tumor</tissue>
    </source>
</reference>
<reference key="5">
    <citation type="journal article" date="2007" name="Mol. Cell. Proteomics">
        <title>Mitochondrial phosphoproteome revealed by an improved IMAC method and MS/MS/MS.</title>
        <authorList>
            <person name="Lee J."/>
            <person name="Xu Y."/>
            <person name="Chen Y."/>
            <person name="Sprung R."/>
            <person name="Kim S.C."/>
            <person name="Xie S."/>
            <person name="Zhao Y."/>
        </authorList>
    </citation>
    <scope>PHOSPHORYLATION [LARGE SCALE ANALYSIS] AT SER-58</scope>
    <scope>IDENTIFICATION BY MASS SPECTROMETRY [LARGE SCALE ANALYSIS]</scope>
    <source>
        <tissue>Liver</tissue>
    </source>
</reference>
<reference key="6">
    <citation type="journal article" date="2010" name="Cell">
        <title>A tissue-specific atlas of mouse protein phosphorylation and expression.</title>
        <authorList>
            <person name="Huttlin E.L."/>
            <person name="Jedrychowski M.P."/>
            <person name="Elias J.E."/>
            <person name="Goswami T."/>
            <person name="Rad R."/>
            <person name="Beausoleil S.A."/>
            <person name="Villen J."/>
            <person name="Haas W."/>
            <person name="Sowa M.E."/>
            <person name="Gygi S.P."/>
        </authorList>
    </citation>
    <scope>IDENTIFICATION BY MASS SPECTROMETRY [LARGE SCALE ANALYSIS]</scope>
    <source>
        <tissue>Brain</tissue>
        <tissue>Brown adipose tissue</tissue>
        <tissue>Liver</tissue>
    </source>
</reference>
<reference key="7">
    <citation type="journal article" date="2005" name="Hum. Mol. Genet.">
        <title>Inactivation of the peroxisomal ABCD2 transporter in the mouse leads to late-onset ataxia involving mitochondria, Golgi and endoplasmic reticulum damage.</title>
        <authorList>
            <person name="Ferrer I."/>
            <person name="Kapfhammer J.P."/>
            <person name="Hindelang C."/>
            <person name="Kemp S."/>
            <person name="Troffer-Charlier N."/>
            <person name="Broccoli V."/>
            <person name="Callyzot N."/>
            <person name="Mooyer P."/>
            <person name="Selhorst J."/>
            <person name="Vreken P."/>
            <person name="Wanders R.J."/>
            <person name="Mandel J.L."/>
            <person name="Pujol A."/>
        </authorList>
    </citation>
    <scope>DISRUPTION PHENOTYPE</scope>
    <scope>FUNCTION</scope>
</reference>
<reference key="8">
    <citation type="journal article" date="2009" name="Am. J. Physiol.">
        <title>A key role for the peroxisomal ABCD2 transporter in fatty acid homeostasis.</title>
        <authorList>
            <person name="Fourcade S."/>
            <person name="Ruiz M."/>
            <person name="Camps C."/>
            <person name="Schlueter A."/>
            <person name="Houten S.M."/>
            <person name="Mooyer P.A."/>
            <person name="Pampols T."/>
            <person name="Dacremont G."/>
            <person name="Wanders R.J."/>
            <person name="Giros M."/>
            <person name="Pujol A."/>
        </authorList>
    </citation>
    <scope>DISRUPTION PHENOTYPE</scope>
    <scope>FUNCTION</scope>
</reference>
<gene>
    <name type="primary">Abcd2</name>
    <name evidence="9" type="synonym">Aldr</name>
</gene>
<comment type="function">
    <text evidence="1 2 6 7">ATP-dependent transporter of the ATP-binding cassette (ABC) family involved in the transport of very long chain fatty acid (VLCFA)-CoA from the cytosol to the peroxisome lumen (By similarity). Like ABCD1 seems to have fatty acyl-CoA thioesterase (ACOT) and ATPase activities, according to this model, VLCFA-CoA as free VLCFA is transpoted in an ATP-dependent manner into peroxisomes after the hydrolysis of VLCFA-CoA mediated by the ACOT activity of ABCD2 (By similarity). Shows overlapping substrate specificities with ABCD1 toward saturated fatty acids (FA) and monounsaturated FA (MUFA) but has a distinct substrate preference for shorter VLCFA (C22:0) and polyunsaturated fatty acid (PUFA) such as C22:6-CoA and C24:6-CoA (in vitro) (By similarity). Thus, may play a role in regulation of VLCFAs and energy metabolism namely, in the degradation and biosynthesis of fatty acids by beta-oxidation (PubMed:16223892, PubMed:18854420).</text>
</comment>
<comment type="catalytic activity">
    <reaction evidence="2">
        <text>a very long-chain fatty acyl-CoA + H2O = a very long-chain fatty acid + CoA + H(+)</text>
        <dbReference type="Rhea" id="RHEA:67072"/>
        <dbReference type="ChEBI" id="CHEBI:15377"/>
        <dbReference type="ChEBI" id="CHEBI:15378"/>
        <dbReference type="ChEBI" id="CHEBI:57287"/>
        <dbReference type="ChEBI" id="CHEBI:58950"/>
        <dbReference type="ChEBI" id="CHEBI:138261"/>
    </reaction>
    <physiologicalReaction direction="left-to-right" evidence="2">
        <dbReference type="Rhea" id="RHEA:67073"/>
    </physiologicalReaction>
</comment>
<comment type="catalytic activity">
    <reaction evidence="2">
        <text>a very long-chain fatty acid(in) + ATP + H2O = a very long-chain fatty acid(out) + ADP + phosphate + H(+)</text>
        <dbReference type="Rhea" id="RHEA:67080"/>
        <dbReference type="ChEBI" id="CHEBI:15377"/>
        <dbReference type="ChEBI" id="CHEBI:15378"/>
        <dbReference type="ChEBI" id="CHEBI:30616"/>
        <dbReference type="ChEBI" id="CHEBI:43474"/>
        <dbReference type="ChEBI" id="CHEBI:58950"/>
        <dbReference type="ChEBI" id="CHEBI:456216"/>
    </reaction>
    <physiologicalReaction direction="left-to-right" evidence="2">
        <dbReference type="Rhea" id="RHEA:67081"/>
    </physiologicalReaction>
</comment>
<comment type="subunit">
    <text evidence="2">Homodimers. Homotetramers. The minimal functional unit is a homodimer but the major oligomeric form in peroxisomal membrane is a homotetramer. Forms heterotramers with ABCD1. Forms heterodimers with ABCD3. In addition to tetramers, some larger molecular assemblies are also found but represented only a minor fraction. Interacts with PEX19.</text>
</comment>
<comment type="subcellular location">
    <subcellularLocation>
        <location evidence="8">Peroxisome membrane</location>
        <topology evidence="3">Multi-pass membrane protein</topology>
    </subcellularLocation>
</comment>
<comment type="tissue specificity">
    <text evidence="8">Strongly expressed in brain and adrenals, and weakly expressed in liver.</text>
</comment>
<comment type="disruption phenotype">
    <text evidence="6 7">Deficient mice exhibit a late-onset cerebellar and sensory ataxia, loss of Purkinje cells, dorsal root ganglia cell degeneration, axonal degeneration in the spinal cord, and an accumulation of very long chain fatty acids (C26:0 and C24:0) in dorsal root ganglia cells, and reduced levels of C22:6omega3 in primary neurons.</text>
</comment>
<comment type="similarity">
    <text evidence="10">Belongs to the ABC transporter superfamily. ABCD family. Peroxisomal fatty acyl CoA transporter (TC 3.A.1.203) subfamily.</text>
</comment>
<feature type="chain" id="PRO_0000093307" description="ATP-binding cassette sub-family D member 2">
    <location>
        <begin position="1"/>
        <end position="741"/>
    </location>
</feature>
<feature type="transmembrane region" description="Helical" evidence="5">
    <location>
        <begin position="107"/>
        <end position="127"/>
    </location>
</feature>
<feature type="transmembrane region" description="Helical" evidence="5">
    <location>
        <begin position="144"/>
        <end position="164"/>
    </location>
</feature>
<feature type="transmembrane region" description="Helical" evidence="5">
    <location>
        <begin position="251"/>
        <end position="271"/>
    </location>
</feature>
<feature type="transmembrane region" description="Helical" evidence="5">
    <location>
        <begin position="351"/>
        <end position="371"/>
    </location>
</feature>
<feature type="domain" description="ABC transmembrane type-1" evidence="5">
    <location>
        <begin position="107"/>
        <end position="399"/>
    </location>
</feature>
<feature type="domain" description="ABC transporter" evidence="4">
    <location>
        <begin position="479"/>
        <end position="705"/>
    </location>
</feature>
<feature type="region of interest" description="Interaction with PEX19" evidence="2">
    <location>
        <begin position="1"/>
        <end position="218"/>
    </location>
</feature>
<feature type="binding site" evidence="4">
    <location>
        <begin position="512"/>
        <end position="519"/>
    </location>
    <ligand>
        <name>ATP</name>
        <dbReference type="ChEBI" id="CHEBI:30616"/>
    </ligand>
</feature>
<feature type="modified residue" description="Phosphoserine" evidence="11">
    <location>
        <position position="58"/>
    </location>
</feature>
<feature type="glycosylation site" description="N-linked (GlcNAc...) asparagine" evidence="3">
    <location>
        <position position="190"/>
    </location>
</feature>
<feature type="glycosylation site" description="N-linked (GlcNAc...) asparagine" evidence="3">
    <location>
        <position position="227"/>
    </location>
</feature>
<feature type="sequence conflict" description="In Ref. 2; BAC38542." evidence="10" ref="2">
    <original>H</original>
    <variation>R</variation>
    <location>
        <position position="296"/>
    </location>
</feature>
<feature type="sequence conflict" description="In Ref. 1; CAA88589 and 4; AAH19187." ref="1 4">
    <original>A</original>
    <variation>P</variation>
    <location>
        <position position="737"/>
    </location>
</feature>
<evidence type="ECO:0000250" key="1">
    <source>
        <dbReference type="UniProtKB" id="P33897"/>
    </source>
</evidence>
<evidence type="ECO:0000250" key="2">
    <source>
        <dbReference type="UniProtKB" id="Q9UBJ2"/>
    </source>
</evidence>
<evidence type="ECO:0000255" key="3"/>
<evidence type="ECO:0000255" key="4">
    <source>
        <dbReference type="PROSITE-ProRule" id="PRU00434"/>
    </source>
</evidence>
<evidence type="ECO:0000255" key="5">
    <source>
        <dbReference type="PROSITE-ProRule" id="PRU00441"/>
    </source>
</evidence>
<evidence type="ECO:0000269" key="6">
    <source>
    </source>
</evidence>
<evidence type="ECO:0000269" key="7">
    <source>
    </source>
</evidence>
<evidence type="ECO:0000269" key="8">
    <source>
    </source>
</evidence>
<evidence type="ECO:0000303" key="9">
    <source>
    </source>
</evidence>
<evidence type="ECO:0000305" key="10"/>
<evidence type="ECO:0007744" key="11">
    <source>
    </source>
</evidence>